<sequence>MESPLGSDLARLVRIWRALIDHRLKPLELTQTHWVTLHNIHQLPPDQSQIQLAKAIGIEQPSLVRTLDQLEEKGLISRQTCASDRRAKRIKLTEKAEPLISEMEAVINKTRAEILHGISAEELEQLIKLIAKLEHNIIELQAKG</sequence>
<name>SLYA_ECO45</name>
<dbReference type="EMBL" id="CU928161">
    <property type="protein sequence ID" value="CAR03003.1"/>
    <property type="molecule type" value="Genomic_DNA"/>
</dbReference>
<dbReference type="RefSeq" id="WP_000445640.1">
    <property type="nucleotide sequence ID" value="NC_011742.1"/>
</dbReference>
<dbReference type="SMR" id="B7M9Z6"/>
<dbReference type="KEGG" id="ecz:ECS88_1690"/>
<dbReference type="HOGENOM" id="CLU_083287_18_2_6"/>
<dbReference type="Proteomes" id="UP000000747">
    <property type="component" value="Chromosome"/>
</dbReference>
<dbReference type="GO" id="GO:0003677">
    <property type="term" value="F:DNA binding"/>
    <property type="evidence" value="ECO:0007669"/>
    <property type="project" value="UniProtKB-UniRule"/>
</dbReference>
<dbReference type="GO" id="GO:0003700">
    <property type="term" value="F:DNA-binding transcription factor activity"/>
    <property type="evidence" value="ECO:0007669"/>
    <property type="project" value="UniProtKB-UniRule"/>
</dbReference>
<dbReference type="GO" id="GO:0006950">
    <property type="term" value="P:response to stress"/>
    <property type="evidence" value="ECO:0007669"/>
    <property type="project" value="TreeGrafter"/>
</dbReference>
<dbReference type="FunFam" id="1.10.10.10:FF:000261">
    <property type="entry name" value="Transcriptional regulator SlyA"/>
    <property type="match status" value="1"/>
</dbReference>
<dbReference type="Gene3D" id="1.10.10.10">
    <property type="entry name" value="Winged helix-like DNA-binding domain superfamily/Winged helix DNA-binding domain"/>
    <property type="match status" value="1"/>
</dbReference>
<dbReference type="HAMAP" id="MF_01819">
    <property type="entry name" value="HTH_type_SlyA"/>
    <property type="match status" value="1"/>
</dbReference>
<dbReference type="InterPro" id="IPR000835">
    <property type="entry name" value="HTH_MarR-typ"/>
</dbReference>
<dbReference type="InterPro" id="IPR039422">
    <property type="entry name" value="MarR/SlyA-like"/>
</dbReference>
<dbReference type="InterPro" id="IPR023187">
    <property type="entry name" value="Tscrpt_reg_MarR-type_CS"/>
</dbReference>
<dbReference type="InterPro" id="IPR023071">
    <property type="entry name" value="Tscrpt_reg_SlyA"/>
</dbReference>
<dbReference type="InterPro" id="IPR036388">
    <property type="entry name" value="WH-like_DNA-bd_sf"/>
</dbReference>
<dbReference type="InterPro" id="IPR036390">
    <property type="entry name" value="WH_DNA-bd_sf"/>
</dbReference>
<dbReference type="NCBIfam" id="NF002926">
    <property type="entry name" value="PRK03573.1"/>
    <property type="match status" value="1"/>
</dbReference>
<dbReference type="PANTHER" id="PTHR33164:SF64">
    <property type="entry name" value="TRANSCRIPTIONAL REGULATOR SLYA"/>
    <property type="match status" value="1"/>
</dbReference>
<dbReference type="PANTHER" id="PTHR33164">
    <property type="entry name" value="TRANSCRIPTIONAL REGULATOR, MARR FAMILY"/>
    <property type="match status" value="1"/>
</dbReference>
<dbReference type="Pfam" id="PF01047">
    <property type="entry name" value="MarR"/>
    <property type="match status" value="1"/>
</dbReference>
<dbReference type="PRINTS" id="PR00598">
    <property type="entry name" value="HTHMARR"/>
</dbReference>
<dbReference type="SMART" id="SM00347">
    <property type="entry name" value="HTH_MARR"/>
    <property type="match status" value="1"/>
</dbReference>
<dbReference type="SUPFAM" id="SSF46785">
    <property type="entry name" value="Winged helix' DNA-binding domain"/>
    <property type="match status" value="1"/>
</dbReference>
<dbReference type="PROSITE" id="PS01117">
    <property type="entry name" value="HTH_MARR_1"/>
    <property type="match status" value="1"/>
</dbReference>
<dbReference type="PROSITE" id="PS50995">
    <property type="entry name" value="HTH_MARR_2"/>
    <property type="match status" value="1"/>
</dbReference>
<feature type="chain" id="PRO_1000188006" description="Transcriptional regulator SlyA">
    <location>
        <begin position="1"/>
        <end position="144"/>
    </location>
</feature>
<feature type="domain" description="HTH marR-type" evidence="1">
    <location>
        <begin position="2"/>
        <end position="135"/>
    </location>
</feature>
<feature type="DNA-binding region" description="H-T-H motif" evidence="1">
    <location>
        <begin position="49"/>
        <end position="72"/>
    </location>
</feature>
<evidence type="ECO:0000255" key="1">
    <source>
        <dbReference type="HAMAP-Rule" id="MF_01819"/>
    </source>
</evidence>
<reference key="1">
    <citation type="journal article" date="2009" name="PLoS Genet.">
        <title>Organised genome dynamics in the Escherichia coli species results in highly diverse adaptive paths.</title>
        <authorList>
            <person name="Touchon M."/>
            <person name="Hoede C."/>
            <person name="Tenaillon O."/>
            <person name="Barbe V."/>
            <person name="Baeriswyl S."/>
            <person name="Bidet P."/>
            <person name="Bingen E."/>
            <person name="Bonacorsi S."/>
            <person name="Bouchier C."/>
            <person name="Bouvet O."/>
            <person name="Calteau A."/>
            <person name="Chiapello H."/>
            <person name="Clermont O."/>
            <person name="Cruveiller S."/>
            <person name="Danchin A."/>
            <person name="Diard M."/>
            <person name="Dossat C."/>
            <person name="Karoui M.E."/>
            <person name="Frapy E."/>
            <person name="Garry L."/>
            <person name="Ghigo J.M."/>
            <person name="Gilles A.M."/>
            <person name="Johnson J."/>
            <person name="Le Bouguenec C."/>
            <person name="Lescat M."/>
            <person name="Mangenot S."/>
            <person name="Martinez-Jehanne V."/>
            <person name="Matic I."/>
            <person name="Nassif X."/>
            <person name="Oztas S."/>
            <person name="Petit M.A."/>
            <person name="Pichon C."/>
            <person name="Rouy Z."/>
            <person name="Ruf C.S."/>
            <person name="Schneider D."/>
            <person name="Tourret J."/>
            <person name="Vacherie B."/>
            <person name="Vallenet D."/>
            <person name="Medigue C."/>
            <person name="Rocha E.P.C."/>
            <person name="Denamur E."/>
        </authorList>
    </citation>
    <scope>NUCLEOTIDE SEQUENCE [LARGE SCALE GENOMIC DNA]</scope>
    <source>
        <strain>S88 / ExPEC</strain>
    </source>
</reference>
<accession>B7M9Z6</accession>
<organism>
    <name type="scientific">Escherichia coli O45:K1 (strain S88 / ExPEC)</name>
    <dbReference type="NCBI Taxonomy" id="585035"/>
    <lineage>
        <taxon>Bacteria</taxon>
        <taxon>Pseudomonadati</taxon>
        <taxon>Pseudomonadota</taxon>
        <taxon>Gammaproteobacteria</taxon>
        <taxon>Enterobacterales</taxon>
        <taxon>Enterobacteriaceae</taxon>
        <taxon>Escherichia</taxon>
    </lineage>
</organism>
<comment type="function">
    <text evidence="1">Transcription regulator that can specifically activate or repress expression of target genes.</text>
</comment>
<comment type="subunit">
    <text evidence="1">Homodimer.</text>
</comment>
<comment type="similarity">
    <text evidence="1">Belongs to the SlyA family.</text>
</comment>
<keyword id="KW-0010">Activator</keyword>
<keyword id="KW-0238">DNA-binding</keyword>
<keyword id="KW-1185">Reference proteome</keyword>
<keyword id="KW-0678">Repressor</keyword>
<keyword id="KW-0804">Transcription</keyword>
<keyword id="KW-0805">Transcription regulation</keyword>
<protein>
    <recommendedName>
        <fullName evidence="1">Transcriptional regulator SlyA</fullName>
    </recommendedName>
</protein>
<proteinExistence type="inferred from homology"/>
<gene>
    <name evidence="1" type="primary">slyA</name>
    <name type="ordered locus">ECS88_1690</name>
</gene>